<sequence>MKLRVLWVGKTQEEWVRRGIDEYAGRVRRYAPLEIGEARDEKGAAAEAMRARECERLDKLVPRTSRLILLDERGDQLTSPEFAAYISRCRDTAVPELAFAIGGAYGFADEFRRRADRVIALSRMTFTHQMVRVVLLEQIYRAFTIIGNEPYHH</sequence>
<protein>
    <recommendedName>
        <fullName evidence="1">Ribosomal RNA large subunit methyltransferase H</fullName>
        <ecNumber evidence="1">2.1.1.177</ecNumber>
    </recommendedName>
    <alternativeName>
        <fullName evidence="1">23S rRNA (pseudouridine1915-N3)-methyltransferase</fullName>
    </alternativeName>
    <alternativeName>
        <fullName evidence="1">23S rRNA m3Psi1915 methyltransferase</fullName>
    </alternativeName>
    <alternativeName>
        <fullName evidence="1">rRNA (pseudouridine-N3-)-methyltransferase RlmH</fullName>
    </alternativeName>
</protein>
<keyword id="KW-0963">Cytoplasm</keyword>
<keyword id="KW-0489">Methyltransferase</keyword>
<keyword id="KW-1185">Reference proteome</keyword>
<keyword id="KW-0698">rRNA processing</keyword>
<keyword id="KW-0949">S-adenosyl-L-methionine</keyword>
<keyword id="KW-0808">Transferase</keyword>
<gene>
    <name evidence="1" type="primary">rlmH</name>
    <name type="ordered locus">GSU3208</name>
</gene>
<accession>Q747Q7</accession>
<feature type="chain" id="PRO_0000198122" description="Ribosomal RNA large subunit methyltransferase H">
    <location>
        <begin position="1"/>
        <end position="153"/>
    </location>
</feature>
<feature type="binding site" evidence="1">
    <location>
        <position position="70"/>
    </location>
    <ligand>
        <name>S-adenosyl-L-methionine</name>
        <dbReference type="ChEBI" id="CHEBI:59789"/>
    </ligand>
</feature>
<feature type="binding site" evidence="1">
    <location>
        <position position="102"/>
    </location>
    <ligand>
        <name>S-adenosyl-L-methionine</name>
        <dbReference type="ChEBI" id="CHEBI:59789"/>
    </ligand>
</feature>
<feature type="binding site" evidence="1">
    <location>
        <begin position="121"/>
        <end position="126"/>
    </location>
    <ligand>
        <name>S-adenosyl-L-methionine</name>
        <dbReference type="ChEBI" id="CHEBI:59789"/>
    </ligand>
</feature>
<name>RLMH_GEOSL</name>
<evidence type="ECO:0000255" key="1">
    <source>
        <dbReference type="HAMAP-Rule" id="MF_00658"/>
    </source>
</evidence>
<proteinExistence type="inferred from homology"/>
<organism>
    <name type="scientific">Geobacter sulfurreducens (strain ATCC 51573 / DSM 12127 / PCA)</name>
    <dbReference type="NCBI Taxonomy" id="243231"/>
    <lineage>
        <taxon>Bacteria</taxon>
        <taxon>Pseudomonadati</taxon>
        <taxon>Thermodesulfobacteriota</taxon>
        <taxon>Desulfuromonadia</taxon>
        <taxon>Geobacterales</taxon>
        <taxon>Geobacteraceae</taxon>
        <taxon>Geobacter</taxon>
    </lineage>
</organism>
<reference key="1">
    <citation type="journal article" date="2003" name="Science">
        <title>Genome of Geobacter sulfurreducens: metal reduction in subsurface environments.</title>
        <authorList>
            <person name="Methe B.A."/>
            <person name="Nelson K.E."/>
            <person name="Eisen J.A."/>
            <person name="Paulsen I.T."/>
            <person name="Nelson W.C."/>
            <person name="Heidelberg J.F."/>
            <person name="Wu D."/>
            <person name="Wu M."/>
            <person name="Ward N.L."/>
            <person name="Beanan M.J."/>
            <person name="Dodson R.J."/>
            <person name="Madupu R."/>
            <person name="Brinkac L.M."/>
            <person name="Daugherty S.C."/>
            <person name="DeBoy R.T."/>
            <person name="Durkin A.S."/>
            <person name="Gwinn M.L."/>
            <person name="Kolonay J.F."/>
            <person name="Sullivan S.A."/>
            <person name="Haft D.H."/>
            <person name="Selengut J."/>
            <person name="Davidsen T.M."/>
            <person name="Zafar N."/>
            <person name="White O."/>
            <person name="Tran B."/>
            <person name="Romero C."/>
            <person name="Forberger H.A."/>
            <person name="Weidman J.F."/>
            <person name="Khouri H.M."/>
            <person name="Feldblyum T.V."/>
            <person name="Utterback T.R."/>
            <person name="Van Aken S.E."/>
            <person name="Lovley D.R."/>
            <person name="Fraser C.M."/>
        </authorList>
    </citation>
    <scope>NUCLEOTIDE SEQUENCE [LARGE SCALE GENOMIC DNA]</scope>
    <source>
        <strain>ATCC 51573 / DSM 12127 / PCA</strain>
    </source>
</reference>
<dbReference type="EC" id="2.1.1.177" evidence="1"/>
<dbReference type="EMBL" id="AE017180">
    <property type="protein sequence ID" value="AAR36599.1"/>
    <property type="molecule type" value="Genomic_DNA"/>
</dbReference>
<dbReference type="RefSeq" id="NP_954249.1">
    <property type="nucleotide sequence ID" value="NC_002939.5"/>
</dbReference>
<dbReference type="RefSeq" id="WP_010943826.1">
    <property type="nucleotide sequence ID" value="NC_002939.5"/>
</dbReference>
<dbReference type="SMR" id="Q747Q7"/>
<dbReference type="FunCoup" id="Q747Q7">
    <property type="interactions" value="385"/>
</dbReference>
<dbReference type="STRING" id="243231.GSU3208"/>
<dbReference type="EnsemblBacteria" id="AAR36599">
    <property type="protein sequence ID" value="AAR36599"/>
    <property type="gene ID" value="GSU3208"/>
</dbReference>
<dbReference type="KEGG" id="gsu:GSU3208"/>
<dbReference type="PATRIC" id="fig|243231.5.peg.3232"/>
<dbReference type="eggNOG" id="COG1576">
    <property type="taxonomic scope" value="Bacteria"/>
</dbReference>
<dbReference type="HOGENOM" id="CLU_100552_2_0_7"/>
<dbReference type="InParanoid" id="Q747Q7"/>
<dbReference type="OrthoDB" id="9806643at2"/>
<dbReference type="Proteomes" id="UP000000577">
    <property type="component" value="Chromosome"/>
</dbReference>
<dbReference type="GO" id="GO:0005737">
    <property type="term" value="C:cytoplasm"/>
    <property type="evidence" value="ECO:0007669"/>
    <property type="project" value="UniProtKB-SubCell"/>
</dbReference>
<dbReference type="GO" id="GO:0070038">
    <property type="term" value="F:rRNA (pseudouridine-N3-)-methyltransferase activity"/>
    <property type="evidence" value="ECO:0007669"/>
    <property type="project" value="UniProtKB-UniRule"/>
</dbReference>
<dbReference type="CDD" id="cd18081">
    <property type="entry name" value="RlmH-like"/>
    <property type="match status" value="1"/>
</dbReference>
<dbReference type="Gene3D" id="3.40.1280.10">
    <property type="match status" value="1"/>
</dbReference>
<dbReference type="HAMAP" id="MF_00658">
    <property type="entry name" value="23SrRNA_methyltr_H"/>
    <property type="match status" value="1"/>
</dbReference>
<dbReference type="InterPro" id="IPR029028">
    <property type="entry name" value="Alpha/beta_knot_MTases"/>
</dbReference>
<dbReference type="InterPro" id="IPR003742">
    <property type="entry name" value="RlmH-like"/>
</dbReference>
<dbReference type="InterPro" id="IPR029026">
    <property type="entry name" value="tRNA_m1G_MTases_N"/>
</dbReference>
<dbReference type="PANTHER" id="PTHR33603">
    <property type="entry name" value="METHYLTRANSFERASE"/>
    <property type="match status" value="1"/>
</dbReference>
<dbReference type="PANTHER" id="PTHR33603:SF1">
    <property type="entry name" value="RIBOSOMAL RNA LARGE SUBUNIT METHYLTRANSFERASE H"/>
    <property type="match status" value="1"/>
</dbReference>
<dbReference type="Pfam" id="PF02590">
    <property type="entry name" value="SPOUT_MTase"/>
    <property type="match status" value="1"/>
</dbReference>
<dbReference type="PIRSF" id="PIRSF004505">
    <property type="entry name" value="MT_bac"/>
    <property type="match status" value="1"/>
</dbReference>
<dbReference type="SUPFAM" id="SSF75217">
    <property type="entry name" value="alpha/beta knot"/>
    <property type="match status" value="1"/>
</dbReference>
<comment type="function">
    <text evidence="1">Specifically methylates the pseudouridine at position 1915 (m3Psi1915) in 23S rRNA.</text>
</comment>
<comment type="catalytic activity">
    <reaction evidence="1">
        <text>pseudouridine(1915) in 23S rRNA + S-adenosyl-L-methionine = N(3)-methylpseudouridine(1915) in 23S rRNA + S-adenosyl-L-homocysteine + H(+)</text>
        <dbReference type="Rhea" id="RHEA:42752"/>
        <dbReference type="Rhea" id="RHEA-COMP:10221"/>
        <dbReference type="Rhea" id="RHEA-COMP:10222"/>
        <dbReference type="ChEBI" id="CHEBI:15378"/>
        <dbReference type="ChEBI" id="CHEBI:57856"/>
        <dbReference type="ChEBI" id="CHEBI:59789"/>
        <dbReference type="ChEBI" id="CHEBI:65314"/>
        <dbReference type="ChEBI" id="CHEBI:74486"/>
        <dbReference type="EC" id="2.1.1.177"/>
    </reaction>
</comment>
<comment type="subunit">
    <text evidence="1">Homodimer.</text>
</comment>
<comment type="subcellular location">
    <subcellularLocation>
        <location evidence="1">Cytoplasm</location>
    </subcellularLocation>
</comment>
<comment type="similarity">
    <text evidence="1">Belongs to the RNA methyltransferase RlmH family.</text>
</comment>